<accession>Q5N808</accession>
<accession>A0A0P0VC68</accession>
<comment type="function">
    <text evidence="1">Intramembrane-cleaving aspartic protease (I-CLiP) that cleaves type II membrane signal peptides in the hydrophobic plane of the membrane.</text>
</comment>
<comment type="subcellular location">
    <subcellularLocation>
        <location evidence="1">Endosome membrane</location>
        <topology evidence="1">Multi-pass membrane protein</topology>
    </subcellularLocation>
</comment>
<comment type="domain">
    <text evidence="1">The PAL motif is required for normal active site conformation.</text>
</comment>
<comment type="PTM">
    <text evidence="1">Glycosylated.</text>
</comment>
<comment type="similarity">
    <text evidence="3">Belongs to the peptidase A22B family.</text>
</comment>
<evidence type="ECO:0000250" key="1"/>
<evidence type="ECO:0000255" key="2"/>
<evidence type="ECO:0000305" key="3"/>
<keyword id="KW-0967">Endosome</keyword>
<keyword id="KW-0325">Glycoprotein</keyword>
<keyword id="KW-0378">Hydrolase</keyword>
<keyword id="KW-0472">Membrane</keyword>
<keyword id="KW-0645">Protease</keyword>
<keyword id="KW-1185">Reference proteome</keyword>
<keyword id="KW-0732">Signal</keyword>
<keyword id="KW-0812">Transmembrane</keyword>
<keyword id="KW-1133">Transmembrane helix</keyword>
<feature type="signal peptide" evidence="2">
    <location>
        <begin position="1"/>
        <end position="35"/>
    </location>
</feature>
<feature type="chain" id="PRO_0000419102" description="Signal peptide peptidase-like 3">
    <location>
        <begin position="36"/>
        <end position="523"/>
    </location>
</feature>
<feature type="topological domain" description="Lumenal" evidence="2">
    <location>
        <begin position="36"/>
        <end position="207"/>
    </location>
</feature>
<feature type="transmembrane region" description="Helical" evidence="2">
    <location>
        <begin position="208"/>
        <end position="228"/>
    </location>
</feature>
<feature type="topological domain" description="Cytoplasmic" evidence="2">
    <location>
        <begin position="229"/>
        <end position="254"/>
    </location>
</feature>
<feature type="transmembrane region" description="Helical" evidence="2">
    <location>
        <begin position="255"/>
        <end position="272"/>
    </location>
</feature>
<feature type="topological domain" description="Lumenal" evidence="2">
    <location>
        <begin position="273"/>
        <end position="275"/>
    </location>
</feature>
<feature type="transmembrane region" description="Helical" evidence="2">
    <location>
        <begin position="276"/>
        <end position="298"/>
    </location>
</feature>
<feature type="topological domain" description="Cytoplasmic" evidence="2">
    <location>
        <begin position="299"/>
        <end position="321"/>
    </location>
</feature>
<feature type="transmembrane region" description="Helical" evidence="2">
    <location>
        <begin position="322"/>
        <end position="342"/>
    </location>
</feature>
<feature type="topological domain" description="Lumenal" evidence="2">
    <location>
        <begin position="343"/>
        <end position="347"/>
    </location>
</feature>
<feature type="transmembrane region" description="Helical" evidence="2">
    <location>
        <begin position="348"/>
        <end position="368"/>
    </location>
</feature>
<feature type="topological domain" description="Cytoplasmic" evidence="2">
    <location>
        <begin position="369"/>
        <end position="377"/>
    </location>
</feature>
<feature type="transmembrane region" description="Helical" evidence="2">
    <location>
        <begin position="378"/>
        <end position="398"/>
    </location>
</feature>
<feature type="topological domain" description="Lumenal" evidence="2">
    <location>
        <begin position="399"/>
        <end position="430"/>
    </location>
</feature>
<feature type="transmembrane region" description="Helical" evidence="2">
    <location>
        <begin position="431"/>
        <end position="451"/>
    </location>
</feature>
<feature type="topological domain" description="Cytoplasmic" evidence="2">
    <location>
        <begin position="452"/>
        <end position="465"/>
    </location>
</feature>
<feature type="transmembrane region" description="Helical" evidence="2">
    <location>
        <begin position="466"/>
        <end position="486"/>
    </location>
</feature>
<feature type="topological domain" description="Lumenal" evidence="2">
    <location>
        <begin position="487"/>
        <end position="489"/>
    </location>
</feature>
<feature type="transmembrane region" description="Helical" evidence="2">
    <location>
        <begin position="490"/>
        <end position="510"/>
    </location>
</feature>
<feature type="topological domain" description="Cytoplasmic" evidence="2">
    <location>
        <begin position="511"/>
        <end position="523"/>
    </location>
</feature>
<feature type="domain" description="PA">
    <location>
        <begin position="110"/>
        <end position="182"/>
    </location>
</feature>
<feature type="short sequence motif" description="PAL">
    <location>
        <begin position="492"/>
        <end position="494"/>
    </location>
</feature>
<feature type="active site" evidence="1">
    <location>
        <position position="387"/>
    </location>
</feature>
<feature type="active site" evidence="1">
    <location>
        <position position="439"/>
    </location>
</feature>
<feature type="glycosylation site" description="N-linked (GlcNAc...) asparagine" evidence="2">
    <location>
        <position position="159"/>
    </location>
</feature>
<reference key="1">
    <citation type="journal article" date="2002" name="Nature">
        <title>The genome sequence and structure of rice chromosome 1.</title>
        <authorList>
            <person name="Sasaki T."/>
            <person name="Matsumoto T."/>
            <person name="Yamamoto K."/>
            <person name="Sakata K."/>
            <person name="Baba T."/>
            <person name="Katayose Y."/>
            <person name="Wu J."/>
            <person name="Niimura Y."/>
            <person name="Cheng Z."/>
            <person name="Nagamura Y."/>
            <person name="Antonio B.A."/>
            <person name="Kanamori H."/>
            <person name="Hosokawa S."/>
            <person name="Masukawa M."/>
            <person name="Arikawa K."/>
            <person name="Chiden Y."/>
            <person name="Hayashi M."/>
            <person name="Okamoto M."/>
            <person name="Ando T."/>
            <person name="Aoki H."/>
            <person name="Arita K."/>
            <person name="Hamada M."/>
            <person name="Harada C."/>
            <person name="Hijishita S."/>
            <person name="Honda M."/>
            <person name="Ichikawa Y."/>
            <person name="Idonuma A."/>
            <person name="Iijima M."/>
            <person name="Ikeda M."/>
            <person name="Ikeno M."/>
            <person name="Ito S."/>
            <person name="Ito T."/>
            <person name="Ito Y."/>
            <person name="Ito Y."/>
            <person name="Iwabuchi A."/>
            <person name="Kamiya K."/>
            <person name="Karasawa W."/>
            <person name="Katagiri S."/>
            <person name="Kikuta A."/>
            <person name="Kobayashi N."/>
            <person name="Kono I."/>
            <person name="Machita K."/>
            <person name="Maehara T."/>
            <person name="Mizuno H."/>
            <person name="Mizubayashi T."/>
            <person name="Mukai Y."/>
            <person name="Nagasaki H."/>
            <person name="Nakashima M."/>
            <person name="Nakama Y."/>
            <person name="Nakamichi Y."/>
            <person name="Nakamura M."/>
            <person name="Namiki N."/>
            <person name="Negishi M."/>
            <person name="Ohta I."/>
            <person name="Ono N."/>
            <person name="Saji S."/>
            <person name="Sakai K."/>
            <person name="Shibata M."/>
            <person name="Shimokawa T."/>
            <person name="Shomura A."/>
            <person name="Song J."/>
            <person name="Takazaki Y."/>
            <person name="Terasawa K."/>
            <person name="Tsuji K."/>
            <person name="Waki K."/>
            <person name="Yamagata H."/>
            <person name="Yamane H."/>
            <person name="Yoshiki S."/>
            <person name="Yoshihara R."/>
            <person name="Yukawa K."/>
            <person name="Zhong H."/>
            <person name="Iwama H."/>
            <person name="Endo T."/>
            <person name="Ito H."/>
            <person name="Hahn J.H."/>
            <person name="Kim H.-I."/>
            <person name="Eun M.-Y."/>
            <person name="Yano M."/>
            <person name="Jiang J."/>
            <person name="Gojobori T."/>
        </authorList>
    </citation>
    <scope>NUCLEOTIDE SEQUENCE [LARGE SCALE GENOMIC DNA]</scope>
    <source>
        <strain>cv. Nipponbare</strain>
    </source>
</reference>
<reference key="2">
    <citation type="journal article" date="2005" name="Nature">
        <title>The map-based sequence of the rice genome.</title>
        <authorList>
            <consortium name="International rice genome sequencing project (IRGSP)"/>
        </authorList>
    </citation>
    <scope>NUCLEOTIDE SEQUENCE [LARGE SCALE GENOMIC DNA]</scope>
    <source>
        <strain>cv. Nipponbare</strain>
    </source>
</reference>
<reference key="3">
    <citation type="journal article" date="2008" name="Nucleic Acids Res.">
        <title>The rice annotation project database (RAP-DB): 2008 update.</title>
        <authorList>
            <consortium name="The rice annotation project (RAP)"/>
        </authorList>
    </citation>
    <scope>GENOME REANNOTATION</scope>
    <source>
        <strain>cv. Nipponbare</strain>
    </source>
</reference>
<reference key="4">
    <citation type="journal article" date="2013" name="Rice">
        <title>Improvement of the Oryza sativa Nipponbare reference genome using next generation sequence and optical map data.</title>
        <authorList>
            <person name="Kawahara Y."/>
            <person name="de la Bastide M."/>
            <person name="Hamilton J.P."/>
            <person name="Kanamori H."/>
            <person name="McCombie W.R."/>
            <person name="Ouyang S."/>
            <person name="Schwartz D.C."/>
            <person name="Tanaka T."/>
            <person name="Wu J."/>
            <person name="Zhou S."/>
            <person name="Childs K.L."/>
            <person name="Davidson R.M."/>
            <person name="Lin H."/>
            <person name="Quesada-Ocampo L."/>
            <person name="Vaillancourt B."/>
            <person name="Sakai H."/>
            <person name="Lee S.S."/>
            <person name="Kim J."/>
            <person name="Numa H."/>
            <person name="Itoh T."/>
            <person name="Buell C.R."/>
            <person name="Matsumoto T."/>
        </authorList>
    </citation>
    <scope>GENOME REANNOTATION</scope>
    <source>
        <strain>cv. Nipponbare</strain>
    </source>
</reference>
<reference key="5">
    <citation type="journal article" date="2005" name="PLoS Biol.">
        <title>The genomes of Oryza sativa: a history of duplications.</title>
        <authorList>
            <person name="Yu J."/>
            <person name="Wang J."/>
            <person name="Lin W."/>
            <person name="Li S."/>
            <person name="Li H."/>
            <person name="Zhou J."/>
            <person name="Ni P."/>
            <person name="Dong W."/>
            <person name="Hu S."/>
            <person name="Zeng C."/>
            <person name="Zhang J."/>
            <person name="Zhang Y."/>
            <person name="Li R."/>
            <person name="Xu Z."/>
            <person name="Li S."/>
            <person name="Li X."/>
            <person name="Zheng H."/>
            <person name="Cong L."/>
            <person name="Lin L."/>
            <person name="Yin J."/>
            <person name="Geng J."/>
            <person name="Li G."/>
            <person name="Shi J."/>
            <person name="Liu J."/>
            <person name="Lv H."/>
            <person name="Li J."/>
            <person name="Wang J."/>
            <person name="Deng Y."/>
            <person name="Ran L."/>
            <person name="Shi X."/>
            <person name="Wang X."/>
            <person name="Wu Q."/>
            <person name="Li C."/>
            <person name="Ren X."/>
            <person name="Wang J."/>
            <person name="Wang X."/>
            <person name="Li D."/>
            <person name="Liu D."/>
            <person name="Zhang X."/>
            <person name="Ji Z."/>
            <person name="Zhao W."/>
            <person name="Sun Y."/>
            <person name="Zhang Z."/>
            <person name="Bao J."/>
            <person name="Han Y."/>
            <person name="Dong L."/>
            <person name="Ji J."/>
            <person name="Chen P."/>
            <person name="Wu S."/>
            <person name="Liu J."/>
            <person name="Xiao Y."/>
            <person name="Bu D."/>
            <person name="Tan J."/>
            <person name="Yang L."/>
            <person name="Ye C."/>
            <person name="Zhang J."/>
            <person name="Xu J."/>
            <person name="Zhou Y."/>
            <person name="Yu Y."/>
            <person name="Zhang B."/>
            <person name="Zhuang S."/>
            <person name="Wei H."/>
            <person name="Liu B."/>
            <person name="Lei M."/>
            <person name="Yu H."/>
            <person name="Li Y."/>
            <person name="Xu H."/>
            <person name="Wei S."/>
            <person name="He X."/>
            <person name="Fang L."/>
            <person name="Zhang Z."/>
            <person name="Zhang Y."/>
            <person name="Huang X."/>
            <person name="Su Z."/>
            <person name="Tong W."/>
            <person name="Li J."/>
            <person name="Tong Z."/>
            <person name="Li S."/>
            <person name="Ye J."/>
            <person name="Wang L."/>
            <person name="Fang L."/>
            <person name="Lei T."/>
            <person name="Chen C.-S."/>
            <person name="Chen H.-C."/>
            <person name="Xu Z."/>
            <person name="Li H."/>
            <person name="Huang H."/>
            <person name="Zhang F."/>
            <person name="Xu H."/>
            <person name="Li N."/>
            <person name="Zhao C."/>
            <person name="Li S."/>
            <person name="Dong L."/>
            <person name="Huang Y."/>
            <person name="Li L."/>
            <person name="Xi Y."/>
            <person name="Qi Q."/>
            <person name="Li W."/>
            <person name="Zhang B."/>
            <person name="Hu W."/>
            <person name="Zhang Y."/>
            <person name="Tian X."/>
            <person name="Jiao Y."/>
            <person name="Liang X."/>
            <person name="Jin J."/>
            <person name="Gao L."/>
            <person name="Zheng W."/>
            <person name="Hao B."/>
            <person name="Liu S.-M."/>
            <person name="Wang W."/>
            <person name="Yuan L."/>
            <person name="Cao M."/>
            <person name="McDermott J."/>
            <person name="Samudrala R."/>
            <person name="Wang J."/>
            <person name="Wong G.K.-S."/>
            <person name="Yang H."/>
        </authorList>
    </citation>
    <scope>NUCLEOTIDE SEQUENCE [LARGE SCALE GENOMIC DNA]</scope>
    <source>
        <strain>cv. Nipponbare</strain>
    </source>
</reference>
<reference key="6">
    <citation type="journal article" date="2003" name="Science">
        <title>Collection, mapping, and annotation of over 28,000 cDNA clones from japonica rice.</title>
        <authorList>
            <consortium name="The rice full-length cDNA consortium"/>
        </authorList>
    </citation>
    <scope>NUCLEOTIDE SEQUENCE [LARGE SCALE MRNA]</scope>
    <source>
        <strain>cv. Nipponbare</strain>
    </source>
</reference>
<reference key="7">
    <citation type="journal article" date="2009" name="Plant Cell Rep.">
        <title>Signal peptide peptidases are expressed in the shoot apex of rice, localized to the endoplasmic reticulum.</title>
        <authorList>
            <person name="Tamura T."/>
            <person name="Kuroda M."/>
            <person name="Oikawa T."/>
            <person name="Kyozuka J."/>
            <person name="Terauchi K."/>
            <person name="Ishimaru Y."/>
            <person name="Abe K."/>
            <person name="Asakura T."/>
        </authorList>
    </citation>
    <scope>GENE FAMILY</scope>
    <scope>NOMENCLATURE</scope>
</reference>
<gene>
    <name type="primary">SPPL3</name>
    <name type="ordered locus">Os01g0914700</name>
    <name type="ordered locus">LOC_Os01g68620</name>
    <name type="ORF">OsJ_04526</name>
    <name type="ORF">P0004D12.11</name>
</gene>
<organism>
    <name type="scientific">Oryza sativa subsp. japonica</name>
    <name type="common">Rice</name>
    <dbReference type="NCBI Taxonomy" id="39947"/>
    <lineage>
        <taxon>Eukaryota</taxon>
        <taxon>Viridiplantae</taxon>
        <taxon>Streptophyta</taxon>
        <taxon>Embryophyta</taxon>
        <taxon>Tracheophyta</taxon>
        <taxon>Spermatophyta</taxon>
        <taxon>Magnoliopsida</taxon>
        <taxon>Liliopsida</taxon>
        <taxon>Poales</taxon>
        <taxon>Poaceae</taxon>
        <taxon>BOP clade</taxon>
        <taxon>Oryzoideae</taxon>
        <taxon>Oryzeae</taxon>
        <taxon>Oryzinae</taxon>
        <taxon>Oryza</taxon>
        <taxon>Oryza sativa</taxon>
    </lineage>
</organism>
<dbReference type="EC" id="3.4.23.-"/>
<dbReference type="EMBL" id="AP003433">
    <property type="protein sequence ID" value="BAD82393.1"/>
    <property type="molecule type" value="Genomic_DNA"/>
</dbReference>
<dbReference type="EMBL" id="AP008207">
    <property type="protein sequence ID" value="BAF07096.1"/>
    <property type="molecule type" value="Genomic_DNA"/>
</dbReference>
<dbReference type="EMBL" id="AP014957">
    <property type="protein sequence ID" value="BAS75867.1"/>
    <property type="molecule type" value="Genomic_DNA"/>
</dbReference>
<dbReference type="EMBL" id="CM000138">
    <property type="protein sequence ID" value="EEE55879.1"/>
    <property type="molecule type" value="Genomic_DNA"/>
</dbReference>
<dbReference type="EMBL" id="AK069261">
    <property type="protein sequence ID" value="BAG91348.1"/>
    <property type="molecule type" value="mRNA"/>
</dbReference>
<dbReference type="RefSeq" id="XP_015645482.1">
    <property type="nucleotide sequence ID" value="XM_015789996.1"/>
</dbReference>
<dbReference type="SMR" id="Q5N808"/>
<dbReference type="FunCoup" id="Q5N808">
    <property type="interactions" value="254"/>
</dbReference>
<dbReference type="STRING" id="39947.Q5N808"/>
<dbReference type="GlyCosmos" id="Q5N808">
    <property type="glycosylation" value="1 site, No reported glycans"/>
</dbReference>
<dbReference type="iPTMnet" id="Q5N808"/>
<dbReference type="PaxDb" id="39947-Q5N808"/>
<dbReference type="EnsemblPlants" id="Os01t0914700-01">
    <property type="protein sequence ID" value="Os01t0914700-01"/>
    <property type="gene ID" value="Os01g0914700"/>
</dbReference>
<dbReference type="Gramene" id="Os01t0914700-01">
    <property type="protein sequence ID" value="Os01t0914700-01"/>
    <property type="gene ID" value="Os01g0914700"/>
</dbReference>
<dbReference type="KEGG" id="dosa:Os01g0914700"/>
<dbReference type="eggNOG" id="KOG2442">
    <property type="taxonomic scope" value="Eukaryota"/>
</dbReference>
<dbReference type="HOGENOM" id="CLU_023799_4_1_1"/>
<dbReference type="InParanoid" id="Q5N808"/>
<dbReference type="OMA" id="KMVCTQN"/>
<dbReference type="OrthoDB" id="29661at2759"/>
<dbReference type="Proteomes" id="UP000000763">
    <property type="component" value="Chromosome 1"/>
</dbReference>
<dbReference type="Proteomes" id="UP000007752">
    <property type="component" value="Chromosome 1"/>
</dbReference>
<dbReference type="Proteomes" id="UP000059680">
    <property type="component" value="Chromosome 1"/>
</dbReference>
<dbReference type="GO" id="GO:0098554">
    <property type="term" value="C:cytoplasmic side of endoplasmic reticulum membrane"/>
    <property type="evidence" value="ECO:0000318"/>
    <property type="project" value="GO_Central"/>
</dbReference>
<dbReference type="GO" id="GO:0010008">
    <property type="term" value="C:endosome membrane"/>
    <property type="evidence" value="ECO:0007669"/>
    <property type="project" value="UniProtKB-SubCell"/>
</dbReference>
<dbReference type="GO" id="GO:0030660">
    <property type="term" value="C:Golgi-associated vesicle membrane"/>
    <property type="evidence" value="ECO:0000318"/>
    <property type="project" value="GO_Central"/>
</dbReference>
<dbReference type="GO" id="GO:0098553">
    <property type="term" value="C:lumenal side of endoplasmic reticulum membrane"/>
    <property type="evidence" value="ECO:0000318"/>
    <property type="project" value="GO_Central"/>
</dbReference>
<dbReference type="GO" id="GO:0005765">
    <property type="term" value="C:lysosomal membrane"/>
    <property type="evidence" value="ECO:0000318"/>
    <property type="project" value="GO_Central"/>
</dbReference>
<dbReference type="GO" id="GO:0042500">
    <property type="term" value="F:aspartic endopeptidase activity, intramembrane cleaving"/>
    <property type="evidence" value="ECO:0000318"/>
    <property type="project" value="GO_Central"/>
</dbReference>
<dbReference type="GO" id="GO:0033619">
    <property type="term" value="P:membrane protein proteolysis"/>
    <property type="evidence" value="ECO:0000318"/>
    <property type="project" value="GO_Central"/>
</dbReference>
<dbReference type="CDD" id="cd02132">
    <property type="entry name" value="PA_GO-like"/>
    <property type="match status" value="1"/>
</dbReference>
<dbReference type="FunFam" id="3.50.30.30:FF:000007">
    <property type="entry name" value="Signal peptide peptidase-like 3"/>
    <property type="match status" value="1"/>
</dbReference>
<dbReference type="Gene3D" id="3.50.30.30">
    <property type="match status" value="1"/>
</dbReference>
<dbReference type="InterPro" id="IPR046450">
    <property type="entry name" value="PA_dom_sf"/>
</dbReference>
<dbReference type="InterPro" id="IPR003137">
    <property type="entry name" value="PA_domain"/>
</dbReference>
<dbReference type="InterPro" id="IPR007369">
    <property type="entry name" value="Peptidase_A22B_SPP"/>
</dbReference>
<dbReference type="InterPro" id="IPR006639">
    <property type="entry name" value="Preselin/SPP"/>
</dbReference>
<dbReference type="PANTHER" id="PTHR12174">
    <property type="entry name" value="SIGNAL PEPTIDE PEPTIDASE"/>
    <property type="match status" value="1"/>
</dbReference>
<dbReference type="PANTHER" id="PTHR12174:SF72">
    <property type="entry name" value="SIGNAL PEPTIDE PEPTIDASE-LIKE 3"/>
    <property type="match status" value="1"/>
</dbReference>
<dbReference type="Pfam" id="PF02225">
    <property type="entry name" value="PA"/>
    <property type="match status" value="1"/>
</dbReference>
<dbReference type="Pfam" id="PF04258">
    <property type="entry name" value="Peptidase_A22B"/>
    <property type="match status" value="1"/>
</dbReference>
<dbReference type="SMART" id="SM00730">
    <property type="entry name" value="PSN"/>
    <property type="match status" value="1"/>
</dbReference>
<dbReference type="SUPFAM" id="SSF52025">
    <property type="entry name" value="PA domain"/>
    <property type="match status" value="1"/>
</dbReference>
<name>SIPL3_ORYSJ</name>
<sequence length="523" mass="56200">MAFPAPSSSSPRRRGRGLAYLLVSVLLLASRVPGAAGADSEFEDGVSPKFPGCDNPFQKVKVTYWVDGDERSSLTGITARFGEVLPATGSDGDKRKAVVPAPKTGCAKSSAPLASSIAVAERGECTFLEKAKTAESGGAAALLLINDEDDLQKMVCTQNDTVPNIGIPVVMVSQSAGRKILSGMDGGAKVDILMYAPEKPSFDGAIPFLWLMAVGSVACASVWSFVVVGDEDKNAPTLGGEEAADSEIVELQTKTALVFIVTASLVLLFLFFFKSTWSAWLLVVLFCLSGLQGLHYVASTLIVRTCDRCREAKVALPVLGNVTVVTLVILPLALIFVVVWAVHQNSPFAWVGQDLMGICMMILVLQVVHLPNIKVATALLVSAFMYDIFWVFISPFIFKKSVMITVARGSDEGPSLPMVLKMPKEFDTWNGYDMIGFGDILFPGLLVAFSFRYDRANGKDLTDGYFLCLMIGYAFGLSCTYVGLYLMKSGQPALLYLVPSTLGTIVTLGAKRGELSQLWNAKV</sequence>
<proteinExistence type="evidence at transcript level"/>
<protein>
    <recommendedName>
        <fullName>Signal peptide peptidase-like 3</fullName>
        <shortName>OsSPPL3</shortName>
        <ecNumber>3.4.23.-</ecNumber>
    </recommendedName>
</protein>